<feature type="chain" id="PRO_0000133450" description="Protein E7">
    <location>
        <begin position="1"/>
        <end position="95"/>
    </location>
</feature>
<feature type="zinc finger region" evidence="1">
    <location>
        <begin position="53"/>
        <end position="91"/>
    </location>
</feature>
<feature type="region of interest" description="E7 terminal domain" evidence="1">
    <location>
        <begin position="1"/>
        <end position="41"/>
    </location>
</feature>
<feature type="short sequence motif" description="LXCXE motif; interaction with host RB1 and TMEM173/STING" evidence="1">
    <location>
        <begin position="22"/>
        <end position="26"/>
    </location>
</feature>
<feature type="short sequence motif" description="Nuclear export signal" evidence="1">
    <location>
        <begin position="72"/>
        <end position="80"/>
    </location>
</feature>
<accession>Q81019</accession>
<keyword id="KW-0010">Activator</keyword>
<keyword id="KW-0238">DNA-binding</keyword>
<keyword id="KW-0244">Early protein</keyword>
<keyword id="KW-1078">G1/S host cell cycle checkpoint dysregulation by virus</keyword>
<keyword id="KW-1035">Host cytoplasm</keyword>
<keyword id="KW-1048">Host nucleus</keyword>
<keyword id="KW-0945">Host-virus interaction</keyword>
<keyword id="KW-1090">Inhibition of host innate immune response by virus</keyword>
<keyword id="KW-1114">Inhibition of host interferon signaling pathway by virus</keyword>
<keyword id="KW-0922">Interferon antiviral system evasion</keyword>
<keyword id="KW-0479">Metal-binding</keyword>
<keyword id="KW-1121">Modulation of host cell cycle by virus</keyword>
<keyword id="KW-0553">Oncogene</keyword>
<keyword id="KW-1185">Reference proteome</keyword>
<keyword id="KW-0804">Transcription</keyword>
<keyword id="KW-0805">Transcription regulation</keyword>
<keyword id="KW-0899">Viral immunoevasion</keyword>
<keyword id="KW-0862">Zinc</keyword>
<keyword id="KW-0863">Zinc-finger</keyword>
<name>VE7_HPV54</name>
<gene>
    <name evidence="1" type="primary">E7</name>
</gene>
<reference key="1">
    <citation type="submission" date="1995-10" db="EMBL/GenBank/DDBJ databases">
        <authorList>
            <person name="Delius H."/>
        </authorList>
    </citation>
    <scope>NUCLEOTIDE SEQUENCE [GENOMIC DNA]</scope>
</reference>
<reference key="2">
    <citation type="journal article" date="2002" name="Rev. Med. Virol.">
        <title>Interactions of SV40 large T antigen and other viral proteins with retinoblastoma tumour suppressor.</title>
        <authorList>
            <person name="Lee C."/>
            <person name="Cho Y."/>
        </authorList>
    </citation>
    <scope>REVIEW</scope>
</reference>
<dbReference type="EMBL" id="U37488">
    <property type="protein sequence ID" value="AAA79188.1"/>
    <property type="molecule type" value="Genomic_DNA"/>
</dbReference>
<dbReference type="RefSeq" id="NP_043289.1">
    <property type="nucleotide sequence ID" value="NC_001676.1"/>
</dbReference>
<dbReference type="SMR" id="Q81019"/>
<dbReference type="GeneID" id="1497433"/>
<dbReference type="KEGG" id="vg:1497433"/>
<dbReference type="OrthoDB" id="28045at10239"/>
<dbReference type="Proteomes" id="UP000007665">
    <property type="component" value="Segment"/>
</dbReference>
<dbReference type="GO" id="GO:0030430">
    <property type="term" value="C:host cell cytoplasm"/>
    <property type="evidence" value="ECO:0007669"/>
    <property type="project" value="UniProtKB-SubCell"/>
</dbReference>
<dbReference type="GO" id="GO:0042025">
    <property type="term" value="C:host cell nucleus"/>
    <property type="evidence" value="ECO:0007669"/>
    <property type="project" value="UniProtKB-SubCell"/>
</dbReference>
<dbReference type="GO" id="GO:0003677">
    <property type="term" value="F:DNA binding"/>
    <property type="evidence" value="ECO:0007669"/>
    <property type="project" value="UniProtKB-UniRule"/>
</dbReference>
<dbReference type="GO" id="GO:0003700">
    <property type="term" value="F:DNA-binding transcription factor activity"/>
    <property type="evidence" value="ECO:0007669"/>
    <property type="project" value="UniProtKB-UniRule"/>
</dbReference>
<dbReference type="GO" id="GO:0019904">
    <property type="term" value="F:protein domain specific binding"/>
    <property type="evidence" value="ECO:0007669"/>
    <property type="project" value="UniProtKB-UniRule"/>
</dbReference>
<dbReference type="GO" id="GO:0008270">
    <property type="term" value="F:zinc ion binding"/>
    <property type="evidence" value="ECO:0007669"/>
    <property type="project" value="UniProtKB-KW"/>
</dbReference>
<dbReference type="GO" id="GO:0006351">
    <property type="term" value="P:DNA-templated transcription"/>
    <property type="evidence" value="ECO:0007669"/>
    <property type="project" value="UniProtKB-UniRule"/>
</dbReference>
<dbReference type="GO" id="GO:0039645">
    <property type="term" value="P:symbiont-mediated perturbation of host cell cycle G1/S transition checkpoint"/>
    <property type="evidence" value="ECO:0007669"/>
    <property type="project" value="UniProtKB-UniRule"/>
</dbReference>
<dbReference type="GO" id="GO:0052170">
    <property type="term" value="P:symbiont-mediated suppression of host innate immune response"/>
    <property type="evidence" value="ECO:0007669"/>
    <property type="project" value="UniProtKB-KW"/>
</dbReference>
<dbReference type="GO" id="GO:0039502">
    <property type="term" value="P:symbiont-mediated suppression of host type I interferon-mediated signaling pathway"/>
    <property type="evidence" value="ECO:0007669"/>
    <property type="project" value="UniProtKB-UniRule"/>
</dbReference>
<dbReference type="Gene3D" id="3.30.160.330">
    <property type="match status" value="1"/>
</dbReference>
<dbReference type="HAMAP" id="MF_04004">
    <property type="entry name" value="PPV_E7"/>
    <property type="match status" value="1"/>
</dbReference>
<dbReference type="InterPro" id="IPR000148">
    <property type="entry name" value="Papilloma_E7"/>
</dbReference>
<dbReference type="Pfam" id="PF00527">
    <property type="entry name" value="E7"/>
    <property type="match status" value="1"/>
</dbReference>
<dbReference type="PIRSF" id="PIRSF003407">
    <property type="entry name" value="Papvi_E7"/>
    <property type="match status" value="1"/>
</dbReference>
<dbReference type="SUPFAM" id="SSF161234">
    <property type="entry name" value="E7 C-terminal domain-like"/>
    <property type="match status" value="1"/>
</dbReference>
<protein>
    <recommendedName>
        <fullName evidence="1">Protein E7</fullName>
    </recommendedName>
</protein>
<evidence type="ECO:0000255" key="1">
    <source>
        <dbReference type="HAMAP-Rule" id="MF_04004"/>
    </source>
</evidence>
<organism>
    <name type="scientific">Human papillomavirus type 54</name>
    <dbReference type="NCBI Taxonomy" id="1671798"/>
    <lineage>
        <taxon>Viruses</taxon>
        <taxon>Monodnaviria</taxon>
        <taxon>Shotokuvirae</taxon>
        <taxon>Cossaviricota</taxon>
        <taxon>Papovaviricetes</taxon>
        <taxon>Zurhausenvirales</taxon>
        <taxon>Papillomaviridae</taxon>
        <taxon>Firstpapillomavirinae</taxon>
        <taxon>Alphapapillomavirus</taxon>
        <taxon>Alphapapillomavirus 13</taxon>
    </lineage>
</organism>
<sequence>MHGNVATIEDIVLDLKPEPFDLYCREQLEDSDAEDETAVTQPDKQAFKVLSQCGGVCCKTVRLCVYSTHTGIRVLQELLHQDALQIVCPTCASRL</sequence>
<organismHost>
    <name type="scientific">Homo sapiens</name>
    <name type="common">Human</name>
    <dbReference type="NCBI Taxonomy" id="9606"/>
</organismHost>
<comment type="function">
    <text evidence="1">Plays a role in viral genome replication by driving entry of quiescent cells into the cell cycle. Stimulation of progression from G1 to S phase allows the virus to efficiently use the cellular DNA replicating machinery to achieve viral genome replication. E7 protein has both transforming and trans-activating activities. Induces the disassembly of the E2F1 transcription factor from RB1, with subsequent transcriptional activation of E2F1-regulated S-phase genes. Interferes with host histone deacetylation mediated by HDAC1 and HDAC2, leading to transcription activation. Also plays a role in the inhibition of both antiviral and antiproliferative functions of host interferon alpha. Interaction with host TMEM173/STING impairs the ability of TMEM173/STING to sense cytosolic DNA and promote the production of type I interferon (IFN-alpha and IFN-beta).</text>
</comment>
<comment type="subunit">
    <text evidence="1">Homodimer. Homooligomer. Interacts with host RB1; this interaction induces dissociation of RB1-E2F1 complex thereby disrupting RB1 activity. Interacts with host EP300; this interaction represses EP300 transcriptional activity. Interacts with protein E2; this interaction inhibits E7 oncogenic activity. Interacts with host TMEM173/STING; this interaction impairs the ability of TMEM173/STING to sense cytosolic DNA and promote the production of type I interferon (IFN-alpha and IFN-beta).</text>
</comment>
<comment type="subcellular location">
    <subcellularLocation>
        <location evidence="1">Host cytoplasm</location>
    </subcellularLocation>
    <subcellularLocation>
        <location evidence="1">Host nucleus</location>
    </subcellularLocation>
    <text evidence="1">Predominantly found in the host nucleus.</text>
</comment>
<comment type="domain">
    <text evidence="1">The E7 terminal domain is an intrinsically disordered domain, whose flexibility and conformational transitions confer target adaptability to the oncoprotein. It allows adaptation to a variety of protein targets and exposes the PEST degradation sequence that regulates its turnover in the cell.</text>
</comment>
<comment type="PTM">
    <text evidence="1">Highly phosphorylated.</text>
</comment>
<comment type="similarity">
    <text evidence="1">Belongs to the papillomaviridae E7 protein family.</text>
</comment>
<proteinExistence type="inferred from homology"/>